<protein>
    <recommendedName>
        <fullName>Keratin-associated protein 10-4</fullName>
    </recommendedName>
    <alternativeName>
        <fullName>High sulfur keratin-associated protein 10.4</fullName>
    </alternativeName>
    <alternativeName>
        <fullName>Keratin-associated protein 10.4</fullName>
    </alternativeName>
    <alternativeName>
        <fullName>Keratin-associated protein 18-4</fullName>
    </alternativeName>
    <alternativeName>
        <fullName>Keratin-associated protein 18.4</fullName>
    </alternativeName>
</protein>
<reference key="1">
    <citation type="journal article" date="2004" name="Genomics">
        <title>A cluster of 21 keratin-associated protein genes within introns of another gene on human chromosome 21q22.3.</title>
        <authorList>
            <person name="Shibuya K."/>
            <person name="Obayashi I."/>
            <person name="Asakawa S."/>
            <person name="Minoshima S."/>
            <person name="Kudoh J."/>
            <person name="Shimizu N."/>
        </authorList>
    </citation>
    <scope>NUCLEOTIDE SEQUENCE [MRNA]</scope>
    <scope>VARIANTS CYS-62 AND VAL-159</scope>
    <source>
        <tissue>Hair root</tissue>
    </source>
</reference>
<reference key="2">
    <citation type="journal article" date="2000" name="Nature">
        <title>The DNA sequence of human chromosome 21.</title>
        <authorList>
            <person name="Hattori M."/>
            <person name="Fujiyama A."/>
            <person name="Taylor T.D."/>
            <person name="Watanabe H."/>
            <person name="Yada T."/>
            <person name="Park H.-S."/>
            <person name="Toyoda A."/>
            <person name="Ishii K."/>
            <person name="Totoki Y."/>
            <person name="Choi D.-K."/>
            <person name="Groner Y."/>
            <person name="Soeda E."/>
            <person name="Ohki M."/>
            <person name="Takagi T."/>
            <person name="Sakaki Y."/>
            <person name="Taudien S."/>
            <person name="Blechschmidt K."/>
            <person name="Polley A."/>
            <person name="Menzel U."/>
            <person name="Delabar J."/>
            <person name="Kumpf K."/>
            <person name="Lehmann R."/>
            <person name="Patterson D."/>
            <person name="Reichwald K."/>
            <person name="Rump A."/>
            <person name="Schillhabel M."/>
            <person name="Schudy A."/>
            <person name="Zimmermann W."/>
            <person name="Rosenthal A."/>
            <person name="Kudoh J."/>
            <person name="Shibuya K."/>
            <person name="Kawasaki K."/>
            <person name="Asakawa S."/>
            <person name="Shintani A."/>
            <person name="Sasaki T."/>
            <person name="Nagamine K."/>
            <person name="Mitsuyama S."/>
            <person name="Antonarakis S.E."/>
            <person name="Minoshima S."/>
            <person name="Shimizu N."/>
            <person name="Nordsiek G."/>
            <person name="Hornischer K."/>
            <person name="Brandt P."/>
            <person name="Scharfe M."/>
            <person name="Schoen O."/>
            <person name="Desario A."/>
            <person name="Reichelt J."/>
            <person name="Kauer G."/>
            <person name="Bloecker H."/>
            <person name="Ramser J."/>
            <person name="Beck A."/>
            <person name="Klages S."/>
            <person name="Hennig S."/>
            <person name="Riesselmann L."/>
            <person name="Dagand E."/>
            <person name="Wehrmeyer S."/>
            <person name="Borzym K."/>
            <person name="Gardiner K."/>
            <person name="Nizetic D."/>
            <person name="Francis F."/>
            <person name="Lehrach H."/>
            <person name="Reinhardt R."/>
            <person name="Yaspo M.-L."/>
        </authorList>
    </citation>
    <scope>NUCLEOTIDE SEQUENCE [LARGE SCALE GENOMIC DNA]</scope>
</reference>
<reference key="3">
    <citation type="journal article" date="2004" name="Genome Res.">
        <title>The status, quality, and expansion of the NIH full-length cDNA project: the Mammalian Gene Collection (MGC).</title>
        <authorList>
            <consortium name="The MGC Project Team"/>
        </authorList>
    </citation>
    <scope>NUCLEOTIDE SEQUENCE [LARGE SCALE MRNA]</scope>
    <scope>VARIANTS CYS-62 AND GLY-285</scope>
</reference>
<comment type="function">
    <text>In the hair cortex, hair keratin intermediate filaments are embedded in an interfilamentous matrix, consisting of hair keratin-associated proteins (KRTAP), which are essential for the formation of a rigid and resistant hair shaft through their extensive disulfide bond cross-linking with abundant cysteine residues of hair keratins. The matrix proteins include the high-sulfur and high-glycine-tyrosine keratins.</text>
</comment>
<comment type="subunit">
    <text>Interacts with hair keratins.</text>
</comment>
<comment type="interaction">
    <interactant intactId="EBI-10178153">
        <id>P60372</id>
    </interactant>
    <interactant intactId="EBI-744545">
        <id>Q8NEC5</id>
        <label>CATSPER1</label>
    </interactant>
    <organismsDiffer>false</organismsDiffer>
    <experiments>3</experiments>
</comment>
<comment type="interaction">
    <interactant intactId="EBI-10178153">
        <id>P60372</id>
    </interactant>
    <interactant intactId="EBI-10178160">
        <id>H3BUJ7</id>
        <label>E4F1</label>
    </interactant>
    <organismsDiffer>false</organismsDiffer>
    <experiments>3</experiments>
</comment>
<comment type="interaction">
    <interactant intactId="EBI-10178153">
        <id>P60372</id>
    </interactant>
    <interactant intactId="EBI-740785">
        <id>P49639</id>
        <label>HOXA1</label>
    </interactant>
    <organismsDiffer>false</organismsDiffer>
    <experiments>3</experiments>
</comment>
<comment type="interaction">
    <interactant intactId="EBI-10178153">
        <id>P60372</id>
    </interactant>
    <interactant intactId="EBI-8293590">
        <id>Q969P0</id>
        <label>IGSF8</label>
    </interactant>
    <organismsDiffer>false</organismsDiffer>
    <experiments>3</experiments>
</comment>
<comment type="interaction">
    <interactant intactId="EBI-10178153">
        <id>P60372</id>
    </interactant>
    <interactant intactId="EBI-2510602">
        <id>Q15040</id>
        <label>JOSD1</label>
    </interactant>
    <organismsDiffer>false</organismsDiffer>
    <experiments>3</experiments>
</comment>
<comment type="interaction">
    <interactant intactId="EBI-10178153">
        <id>P60372</id>
    </interactant>
    <interactant intactId="EBI-8481036">
        <id>Q6UXX9</id>
        <label>RSPO2</label>
    </interactant>
    <organismsDiffer>false</organismsDiffer>
    <experiments>3</experiments>
</comment>
<comment type="interaction">
    <interactant intactId="EBI-10178153">
        <id>P60372</id>
    </interactant>
    <interactant intactId="EBI-1965483">
        <id>P17041</id>
        <label>ZNF32</label>
    </interactant>
    <organismsDiffer>false</organismsDiffer>
    <experiments>3</experiments>
</comment>
<comment type="interaction">
    <interactant intactId="EBI-10178153">
        <id>P60372</id>
    </interactant>
    <interactant intactId="EBI-4395587">
        <id>Q96I27</id>
        <label>ZNF625</label>
    </interactant>
    <organismsDiffer>false</organismsDiffer>
    <experiments>3</experiments>
</comment>
<comment type="interaction">
    <interactant intactId="EBI-10178153">
        <id>P60372</id>
    </interactant>
    <interactant intactId="EBI-3920053">
        <id>Q16670</id>
        <label>ZSCAN26</label>
    </interactant>
    <organismsDiffer>false</organismsDiffer>
    <experiments>3</experiments>
</comment>
<comment type="tissue specificity">
    <text>Restricted to hair root, not detected in any other tissues.</text>
</comment>
<comment type="similarity">
    <text evidence="3">Belongs to the KRTAP type 10 family.</text>
</comment>
<proteinExistence type="evidence at protein level"/>
<accession>P60372</accession>
<accession>Q08AS0</accession>
<dbReference type="EMBL" id="AB076351">
    <property type="protein sequence ID" value="BAD01538.1"/>
    <property type="molecule type" value="mRNA"/>
</dbReference>
<dbReference type="EMBL" id="AL773602">
    <property type="status" value="NOT_ANNOTATED_CDS"/>
    <property type="molecule type" value="Genomic_DNA"/>
</dbReference>
<dbReference type="EMBL" id="BC125048">
    <property type="protein sequence ID" value="AAI25049.1"/>
    <property type="molecule type" value="mRNA"/>
</dbReference>
<dbReference type="EMBL" id="BC125049">
    <property type="protein sequence ID" value="AAI25050.1"/>
    <property type="molecule type" value="mRNA"/>
</dbReference>
<dbReference type="CCDS" id="CCDS42957.1"/>
<dbReference type="RefSeq" id="NP_941960.2">
    <property type="nucleotide sequence ID" value="NM_198687.2"/>
</dbReference>
<dbReference type="FunCoup" id="P60372">
    <property type="interactions" value="43"/>
</dbReference>
<dbReference type="IntAct" id="P60372">
    <property type="interactions" value="10"/>
</dbReference>
<dbReference type="STRING" id="9606.ENSP00000383225"/>
<dbReference type="PhosphoSitePlus" id="P60372"/>
<dbReference type="BioMuta" id="KRTAP10-4"/>
<dbReference type="DMDM" id="42558952"/>
<dbReference type="MassIVE" id="P60372"/>
<dbReference type="PaxDb" id="9606-ENSP00000383225"/>
<dbReference type="PeptideAtlas" id="P60372"/>
<dbReference type="ProteomicsDB" id="57201"/>
<dbReference type="Antibodypedia" id="82342">
    <property type="antibodies" value="1 antibodies from 1 providers"/>
</dbReference>
<dbReference type="Ensembl" id="ENST00000400374.4">
    <property type="protein sequence ID" value="ENSP00000383225.3"/>
    <property type="gene ID" value="ENSG00000215454.7"/>
</dbReference>
<dbReference type="GeneID" id="386672"/>
<dbReference type="KEGG" id="hsa:386672"/>
<dbReference type="MANE-Select" id="ENST00000400374.4">
    <property type="protein sequence ID" value="ENSP00000383225.3"/>
    <property type="RefSeq nucleotide sequence ID" value="NM_198687.2"/>
    <property type="RefSeq protein sequence ID" value="NP_941960.2"/>
</dbReference>
<dbReference type="UCSC" id="uc002zfk.2">
    <property type="organism name" value="human"/>
</dbReference>
<dbReference type="AGR" id="HGNC:20521"/>
<dbReference type="CTD" id="386672"/>
<dbReference type="GeneCards" id="KRTAP10-4"/>
<dbReference type="HGNC" id="HGNC:20521">
    <property type="gene designation" value="KRTAP10-4"/>
</dbReference>
<dbReference type="HPA" id="ENSG00000215454">
    <property type="expression patterns" value="Tissue enriched (skin)"/>
</dbReference>
<dbReference type="neXtProt" id="NX_P60372"/>
<dbReference type="OpenTargets" id="ENSG00000215454"/>
<dbReference type="PharmGKB" id="PA134942730"/>
<dbReference type="VEuPathDB" id="HostDB:ENSG00000215454"/>
<dbReference type="eggNOG" id="KOG4726">
    <property type="taxonomic scope" value="Eukaryota"/>
</dbReference>
<dbReference type="GeneTree" id="ENSGT00940000165026"/>
<dbReference type="HOGENOM" id="CLU_062832_0_0_1"/>
<dbReference type="InParanoid" id="P60372"/>
<dbReference type="OMA" id="DENSKCK"/>
<dbReference type="OrthoDB" id="9635131at2759"/>
<dbReference type="PAN-GO" id="P60372">
    <property type="GO annotations" value="0 GO annotations based on evolutionary models"/>
</dbReference>
<dbReference type="TreeFam" id="TF351356"/>
<dbReference type="PathwayCommons" id="P60372"/>
<dbReference type="Reactome" id="R-HSA-6805567">
    <property type="pathway name" value="Keratinization"/>
</dbReference>
<dbReference type="SignaLink" id="P60372"/>
<dbReference type="Pharos" id="P60372">
    <property type="development level" value="Tdark"/>
</dbReference>
<dbReference type="PRO" id="PR:P60372"/>
<dbReference type="Proteomes" id="UP000005640">
    <property type="component" value="Chromosome 21"/>
</dbReference>
<dbReference type="RNAct" id="P60372">
    <property type="molecule type" value="protein"/>
</dbReference>
<dbReference type="Bgee" id="ENSG00000215454">
    <property type="expression patterns" value="Expressed in skin of abdomen and 7 other cell types or tissues"/>
</dbReference>
<dbReference type="ExpressionAtlas" id="P60372">
    <property type="expression patterns" value="baseline and differential"/>
</dbReference>
<dbReference type="GO" id="GO:0005829">
    <property type="term" value="C:cytosol"/>
    <property type="evidence" value="ECO:0000304"/>
    <property type="project" value="Reactome"/>
</dbReference>
<dbReference type="GO" id="GO:0045095">
    <property type="term" value="C:keratin filament"/>
    <property type="evidence" value="ECO:0007669"/>
    <property type="project" value="InterPro"/>
</dbReference>
<dbReference type="InterPro" id="IPR002494">
    <property type="entry name" value="KAP"/>
</dbReference>
<dbReference type="PANTHER" id="PTHR23262">
    <property type="entry name" value="KERATIN ASSOCIATED PROTEIN"/>
    <property type="match status" value="1"/>
</dbReference>
<dbReference type="PANTHER" id="PTHR23262:SF50">
    <property type="entry name" value="KERATIN-ASSOCIATED PROTEIN 10-1"/>
    <property type="match status" value="1"/>
</dbReference>
<dbReference type="Pfam" id="PF13885">
    <property type="entry name" value="Keratin_B2_2"/>
    <property type="match status" value="4"/>
</dbReference>
<keyword id="KW-0416">Keratin</keyword>
<keyword id="KW-1267">Proteomics identification</keyword>
<keyword id="KW-1185">Reference proteome</keyword>
<keyword id="KW-0677">Repeat</keyword>
<organism>
    <name type="scientific">Homo sapiens</name>
    <name type="common">Human</name>
    <dbReference type="NCBI Taxonomy" id="9606"/>
    <lineage>
        <taxon>Eukaryota</taxon>
        <taxon>Metazoa</taxon>
        <taxon>Chordata</taxon>
        <taxon>Craniata</taxon>
        <taxon>Vertebrata</taxon>
        <taxon>Euteleostomi</taxon>
        <taxon>Mammalia</taxon>
        <taxon>Eutheria</taxon>
        <taxon>Euarchontoglires</taxon>
        <taxon>Primates</taxon>
        <taxon>Haplorrhini</taxon>
        <taxon>Catarrhini</taxon>
        <taxon>Hominidae</taxon>
        <taxon>Homo</taxon>
    </lineage>
</organism>
<sequence>MSVCSSDLSYSSRVCLPGSCDSCSDSWQVDDCPESCCEPPCCAPSCCAPAPCLSLVCTPVSRVSSPCCPVTCEPSPCQSGCTSSCTPSCCQQSSCQLACCASSPCQQACCVPVCCKTVCCKPVCCVPVCCGDSSCCQQSSCQSACCTSSPCQQACCVPICCKPVCSGISSSCCQQSSCVSCVSSPCCQAVCEPSPCQSGCISSCTPSCCQQSSCQPACCTSSSCQQACCVPVCCKTVCCKPVCSEDSSSCCQQSSCQPACCTSSPCQQACCVPVCCKPVCCKPVCSVPICSGASSLCCQQSSCQPACCTSSQSQQGCCVPVCCKPVSCVPVCSGASSSCCQQSSCQPACCTTSCCRPSSSVSLLCRPVCRPACCVPVPSCCAPTSSCQPSCCRPASCVSLL</sequence>
<feature type="chain" id="PRO_0000185212" description="Keratin-associated protein 10-4">
    <location>
        <begin position="1"/>
        <end position="401"/>
    </location>
</feature>
<feature type="repeat" description="1">
    <location>
        <begin position="36"/>
        <end position="40"/>
    </location>
</feature>
<feature type="repeat" description="2">
    <location>
        <begin position="41"/>
        <end position="45"/>
    </location>
</feature>
<feature type="repeat" description="3">
    <location>
        <begin position="46"/>
        <end position="50"/>
    </location>
</feature>
<feature type="repeat" description="4">
    <location>
        <begin position="67"/>
        <end position="71"/>
    </location>
</feature>
<feature type="repeat" description="5">
    <location>
        <begin position="89"/>
        <end position="93"/>
    </location>
</feature>
<feature type="repeat" description="6">
    <location>
        <begin position="99"/>
        <end position="103"/>
    </location>
</feature>
<feature type="repeat" description="7">
    <location>
        <begin position="109"/>
        <end position="113"/>
    </location>
</feature>
<feature type="repeat" description="8">
    <location>
        <begin position="114"/>
        <end position="118"/>
    </location>
</feature>
<feature type="repeat" description="9">
    <location>
        <begin position="119"/>
        <end position="123"/>
    </location>
</feature>
<feature type="repeat" description="10">
    <location>
        <begin position="124"/>
        <end position="128"/>
    </location>
</feature>
<feature type="repeat" description="11">
    <location>
        <begin position="129"/>
        <end position="133"/>
    </location>
</feature>
<feature type="repeat" description="12">
    <location>
        <begin position="135"/>
        <end position="139"/>
    </location>
</feature>
<feature type="repeat" description="13">
    <location>
        <begin position="145"/>
        <end position="149"/>
    </location>
</feature>
<feature type="repeat" description="14">
    <location>
        <begin position="155"/>
        <end position="159"/>
    </location>
</feature>
<feature type="repeat" description="15">
    <location>
        <begin position="160"/>
        <end position="164"/>
    </location>
</feature>
<feature type="repeat" description="16">
    <location>
        <begin position="172"/>
        <end position="176"/>
    </location>
</feature>
<feature type="repeat" description="17">
    <location>
        <begin position="186"/>
        <end position="190"/>
    </location>
</feature>
<feature type="repeat" description="18">
    <location>
        <begin position="208"/>
        <end position="212"/>
    </location>
</feature>
<feature type="repeat" description="19">
    <location>
        <begin position="218"/>
        <end position="222"/>
    </location>
</feature>
<feature type="repeat" description="20">
    <location>
        <begin position="228"/>
        <end position="232"/>
    </location>
</feature>
<feature type="repeat" description="21">
    <location>
        <begin position="233"/>
        <end position="237"/>
    </location>
</feature>
<feature type="repeat" description="22">
    <location>
        <begin position="238"/>
        <end position="242"/>
    </location>
</feature>
<feature type="repeat" description="23">
    <location>
        <begin position="250"/>
        <end position="254"/>
    </location>
</feature>
<feature type="repeat" description="24">
    <location>
        <begin position="270"/>
        <end position="274"/>
    </location>
</feature>
<feature type="repeat" description="25">
    <location>
        <begin position="275"/>
        <end position="279"/>
    </location>
</feature>
<feature type="repeat" description="26">
    <location>
        <begin position="280"/>
        <end position="284"/>
    </location>
</feature>
<feature type="repeat" description="27">
    <location>
        <begin position="297"/>
        <end position="301"/>
    </location>
</feature>
<feature type="repeat" description="28">
    <location>
        <begin position="307"/>
        <end position="311"/>
    </location>
</feature>
<feature type="repeat" description="29">
    <location>
        <begin position="317"/>
        <end position="321"/>
    </location>
</feature>
<feature type="repeat" description="30">
    <location>
        <begin position="322"/>
        <end position="326"/>
    </location>
</feature>
<feature type="repeat" description="31">
    <location>
        <begin position="339"/>
        <end position="343"/>
    </location>
</feature>
<feature type="repeat" description="33">
    <location>
        <begin position="349"/>
        <end position="353"/>
    </location>
</feature>
<feature type="repeat" description="34">
    <location>
        <begin position="354"/>
        <end position="358"/>
    </location>
</feature>
<feature type="repeat" description="35">
    <location>
        <begin position="373"/>
        <end position="377"/>
    </location>
</feature>
<feature type="repeat" description="36">
    <location>
        <begin position="391"/>
        <end position="395"/>
    </location>
</feature>
<feature type="region of interest" description="36 X 5 AA repeats of C-C-X(3)">
    <location>
        <begin position="36"/>
        <end position="395"/>
    </location>
</feature>
<feature type="sequence variant" id="VAR_017694" description="In dbSNP:rs233285." evidence="1 2">
    <original>R</original>
    <variation>C</variation>
    <location>
        <position position="62"/>
    </location>
</feature>
<feature type="sequence variant" id="VAR_017695" description="In dbSNP:rs79048509." evidence="1">
    <original>I</original>
    <variation>V</variation>
    <location>
        <position position="159"/>
    </location>
</feature>
<feature type="sequence variant" id="VAR_062112" description="In dbSNP:rs396912." evidence="2">
    <original>C</original>
    <variation>G</variation>
    <location>
        <position position="285"/>
    </location>
</feature>
<evidence type="ECO:0000269" key="1">
    <source>
    </source>
</evidence>
<evidence type="ECO:0000269" key="2">
    <source>
    </source>
</evidence>
<evidence type="ECO:0000305" key="3"/>
<name>KR104_HUMAN</name>
<gene>
    <name type="primary">KRTAP10-4</name>
    <name type="synonym">KAP10.4</name>
    <name type="synonym">KAP18-4</name>
    <name type="synonym">KRTAP10.4</name>
    <name type="synonym">KRTAP18-4</name>
    <name type="synonym">KRTAP18.4</name>
</gene>